<feature type="chain" id="PRO_0000154488" description="Anthranilate phosphoribosyltransferase">
    <location>
        <begin position="1"/>
        <end position="354"/>
    </location>
</feature>
<feature type="binding site" evidence="1">
    <location>
        <position position="94"/>
    </location>
    <ligand>
        <name>5-phospho-alpha-D-ribose 1-diphosphate</name>
        <dbReference type="ChEBI" id="CHEBI:58017"/>
    </ligand>
</feature>
<feature type="binding site" evidence="1">
    <location>
        <position position="94"/>
    </location>
    <ligand>
        <name>anthranilate</name>
        <dbReference type="ChEBI" id="CHEBI:16567"/>
        <label>1</label>
    </ligand>
</feature>
<feature type="binding site" evidence="1">
    <location>
        <begin position="97"/>
        <end position="98"/>
    </location>
    <ligand>
        <name>5-phospho-alpha-D-ribose 1-diphosphate</name>
        <dbReference type="ChEBI" id="CHEBI:58017"/>
    </ligand>
</feature>
<feature type="binding site" evidence="1">
    <location>
        <position position="102"/>
    </location>
    <ligand>
        <name>5-phospho-alpha-D-ribose 1-diphosphate</name>
        <dbReference type="ChEBI" id="CHEBI:58017"/>
    </ligand>
</feature>
<feature type="binding site" evidence="1">
    <location>
        <begin position="104"/>
        <end position="107"/>
    </location>
    <ligand>
        <name>5-phospho-alpha-D-ribose 1-diphosphate</name>
        <dbReference type="ChEBI" id="CHEBI:58017"/>
    </ligand>
</feature>
<feature type="binding site" evidence="1">
    <location>
        <position position="106"/>
    </location>
    <ligand>
        <name>Mg(2+)</name>
        <dbReference type="ChEBI" id="CHEBI:18420"/>
        <label>1</label>
    </ligand>
</feature>
<feature type="binding site" evidence="1">
    <location>
        <begin position="122"/>
        <end position="130"/>
    </location>
    <ligand>
        <name>5-phospho-alpha-D-ribose 1-diphosphate</name>
        <dbReference type="ChEBI" id="CHEBI:58017"/>
    </ligand>
</feature>
<feature type="binding site" evidence="1">
    <location>
        <position position="125"/>
    </location>
    <ligand>
        <name>anthranilate</name>
        <dbReference type="ChEBI" id="CHEBI:16567"/>
        <label>1</label>
    </ligand>
</feature>
<feature type="binding site" evidence="1">
    <location>
        <position position="134"/>
    </location>
    <ligand>
        <name>5-phospho-alpha-D-ribose 1-diphosphate</name>
        <dbReference type="ChEBI" id="CHEBI:58017"/>
    </ligand>
</feature>
<feature type="binding site" evidence="1">
    <location>
        <position position="180"/>
    </location>
    <ligand>
        <name>anthranilate</name>
        <dbReference type="ChEBI" id="CHEBI:16567"/>
        <label>2</label>
    </ligand>
</feature>
<feature type="binding site" evidence="1">
    <location>
        <position position="238"/>
    </location>
    <ligand>
        <name>Mg(2+)</name>
        <dbReference type="ChEBI" id="CHEBI:18420"/>
        <label>2</label>
    </ligand>
</feature>
<feature type="binding site" evidence="1">
    <location>
        <position position="239"/>
    </location>
    <ligand>
        <name>Mg(2+)</name>
        <dbReference type="ChEBI" id="CHEBI:18420"/>
        <label>1</label>
    </ligand>
</feature>
<feature type="binding site" evidence="1">
    <location>
        <position position="239"/>
    </location>
    <ligand>
        <name>Mg(2+)</name>
        <dbReference type="ChEBI" id="CHEBI:18420"/>
        <label>2</label>
    </ligand>
</feature>
<dbReference type="EC" id="2.4.2.18" evidence="1"/>
<dbReference type="EMBL" id="BA000030">
    <property type="protein sequence ID" value="BAC73767.1"/>
    <property type="molecule type" value="Genomic_DNA"/>
</dbReference>
<dbReference type="RefSeq" id="WP_010987457.1">
    <property type="nucleotide sequence ID" value="NZ_JZJK01000089.1"/>
</dbReference>
<dbReference type="SMR" id="Q82AK1"/>
<dbReference type="GeneID" id="41543133"/>
<dbReference type="KEGG" id="sma:SAVERM_6056"/>
<dbReference type="eggNOG" id="COG0547">
    <property type="taxonomic scope" value="Bacteria"/>
</dbReference>
<dbReference type="HOGENOM" id="CLU_034315_4_1_11"/>
<dbReference type="OrthoDB" id="9806430at2"/>
<dbReference type="UniPathway" id="UPA00035">
    <property type="reaction ID" value="UER00041"/>
</dbReference>
<dbReference type="Proteomes" id="UP000000428">
    <property type="component" value="Chromosome"/>
</dbReference>
<dbReference type="GO" id="GO:0005829">
    <property type="term" value="C:cytosol"/>
    <property type="evidence" value="ECO:0007669"/>
    <property type="project" value="TreeGrafter"/>
</dbReference>
<dbReference type="GO" id="GO:0004048">
    <property type="term" value="F:anthranilate phosphoribosyltransferase activity"/>
    <property type="evidence" value="ECO:0007669"/>
    <property type="project" value="UniProtKB-UniRule"/>
</dbReference>
<dbReference type="GO" id="GO:0000287">
    <property type="term" value="F:magnesium ion binding"/>
    <property type="evidence" value="ECO:0007669"/>
    <property type="project" value="UniProtKB-UniRule"/>
</dbReference>
<dbReference type="GO" id="GO:0000162">
    <property type="term" value="P:L-tryptophan biosynthetic process"/>
    <property type="evidence" value="ECO:0007669"/>
    <property type="project" value="UniProtKB-UniRule"/>
</dbReference>
<dbReference type="FunFam" id="1.20.970.10:FF:000006">
    <property type="entry name" value="Anthranilate phosphoribosyltransferase"/>
    <property type="match status" value="1"/>
</dbReference>
<dbReference type="FunFam" id="3.40.1030.10:FF:000002">
    <property type="entry name" value="Anthranilate phosphoribosyltransferase"/>
    <property type="match status" value="1"/>
</dbReference>
<dbReference type="Gene3D" id="3.40.1030.10">
    <property type="entry name" value="Nucleoside phosphorylase/phosphoribosyltransferase catalytic domain"/>
    <property type="match status" value="1"/>
</dbReference>
<dbReference type="Gene3D" id="1.20.970.10">
    <property type="entry name" value="Transferase, Pyrimidine Nucleoside Phosphorylase, Chain C"/>
    <property type="match status" value="1"/>
</dbReference>
<dbReference type="HAMAP" id="MF_00211">
    <property type="entry name" value="TrpD"/>
    <property type="match status" value="1"/>
</dbReference>
<dbReference type="InterPro" id="IPR005940">
    <property type="entry name" value="Anthranilate_Pribosyl_Tfrase"/>
</dbReference>
<dbReference type="InterPro" id="IPR000312">
    <property type="entry name" value="Glycosyl_Trfase_fam3"/>
</dbReference>
<dbReference type="InterPro" id="IPR017459">
    <property type="entry name" value="Glycosyl_Trfase_fam3_N_dom"/>
</dbReference>
<dbReference type="InterPro" id="IPR036320">
    <property type="entry name" value="Glycosyl_Trfase_fam3_N_dom_sf"/>
</dbReference>
<dbReference type="InterPro" id="IPR035902">
    <property type="entry name" value="Nuc_phospho_transferase"/>
</dbReference>
<dbReference type="NCBIfam" id="TIGR01245">
    <property type="entry name" value="trpD"/>
    <property type="match status" value="1"/>
</dbReference>
<dbReference type="PANTHER" id="PTHR43285">
    <property type="entry name" value="ANTHRANILATE PHOSPHORIBOSYLTRANSFERASE"/>
    <property type="match status" value="1"/>
</dbReference>
<dbReference type="PANTHER" id="PTHR43285:SF2">
    <property type="entry name" value="ANTHRANILATE PHOSPHORIBOSYLTRANSFERASE"/>
    <property type="match status" value="1"/>
</dbReference>
<dbReference type="Pfam" id="PF02885">
    <property type="entry name" value="Glycos_trans_3N"/>
    <property type="match status" value="1"/>
</dbReference>
<dbReference type="Pfam" id="PF00591">
    <property type="entry name" value="Glycos_transf_3"/>
    <property type="match status" value="1"/>
</dbReference>
<dbReference type="SUPFAM" id="SSF52418">
    <property type="entry name" value="Nucleoside phosphorylase/phosphoribosyltransferase catalytic domain"/>
    <property type="match status" value="1"/>
</dbReference>
<dbReference type="SUPFAM" id="SSF47648">
    <property type="entry name" value="Nucleoside phosphorylase/phosphoribosyltransferase N-terminal domain"/>
    <property type="match status" value="1"/>
</dbReference>
<protein>
    <recommendedName>
        <fullName evidence="1">Anthranilate phosphoribosyltransferase</fullName>
        <ecNumber evidence="1">2.4.2.18</ecNumber>
    </recommendedName>
</protein>
<reference key="1">
    <citation type="journal article" date="2001" name="Proc. Natl. Acad. Sci. U.S.A.">
        <title>Genome sequence of an industrial microorganism Streptomyces avermitilis: deducing the ability of producing secondary metabolites.</title>
        <authorList>
            <person name="Omura S."/>
            <person name="Ikeda H."/>
            <person name="Ishikawa J."/>
            <person name="Hanamoto A."/>
            <person name="Takahashi C."/>
            <person name="Shinose M."/>
            <person name="Takahashi Y."/>
            <person name="Horikawa H."/>
            <person name="Nakazawa H."/>
            <person name="Osonoe T."/>
            <person name="Kikuchi H."/>
            <person name="Shiba T."/>
            <person name="Sakaki Y."/>
            <person name="Hattori M."/>
        </authorList>
    </citation>
    <scope>NUCLEOTIDE SEQUENCE [LARGE SCALE GENOMIC DNA]</scope>
    <source>
        <strain>ATCC 31267 / DSM 46492 / JCM 5070 / NBRC 14893 / NCIMB 12804 / NRRL 8165 / MA-4680</strain>
    </source>
</reference>
<reference key="2">
    <citation type="journal article" date="2003" name="Nat. Biotechnol.">
        <title>Complete genome sequence and comparative analysis of the industrial microorganism Streptomyces avermitilis.</title>
        <authorList>
            <person name="Ikeda H."/>
            <person name="Ishikawa J."/>
            <person name="Hanamoto A."/>
            <person name="Shinose M."/>
            <person name="Kikuchi H."/>
            <person name="Shiba T."/>
            <person name="Sakaki Y."/>
            <person name="Hattori M."/>
            <person name="Omura S."/>
        </authorList>
    </citation>
    <scope>NUCLEOTIDE SEQUENCE [LARGE SCALE GENOMIC DNA]</scope>
    <source>
        <strain>ATCC 31267 / DSM 46492 / JCM 5070 / NBRC 14893 / NCIMB 12804 / NRRL 8165 / MA-4680</strain>
    </source>
</reference>
<accession>Q82AK1</accession>
<gene>
    <name evidence="1" type="primary">trpD</name>
    <name type="ordered locus">SAV_6056</name>
</gene>
<organism>
    <name type="scientific">Streptomyces avermitilis (strain ATCC 31267 / DSM 46492 / JCM 5070 / NBRC 14893 / NCIMB 12804 / NRRL 8165 / MA-4680)</name>
    <dbReference type="NCBI Taxonomy" id="227882"/>
    <lineage>
        <taxon>Bacteria</taxon>
        <taxon>Bacillati</taxon>
        <taxon>Actinomycetota</taxon>
        <taxon>Actinomycetes</taxon>
        <taxon>Kitasatosporales</taxon>
        <taxon>Streptomycetaceae</taxon>
        <taxon>Streptomyces</taxon>
    </lineage>
</organism>
<proteinExistence type="inferred from homology"/>
<sequence length="354" mass="36520">MSAVNPAGGDIAAGRSWPEVLNGLLDGRDQSADDTAWAMDRIMRGEATDAQIAGFLVALRAKGETVEEISGLVRAMYEHANLIEVPGATVDIVGTGGDGAKTVNISTMSSIVVAGTGAKVVKHGNRAASSASGSSDVLEKLGINLQLTPKRVAEVAEEAGITICFAVKFHPALRHVAAARGQLGIRTTFNVLGPLTNPARVKAQAVGVADPRMAPIVAGVFAERGNSSLVFRGDDGLDELTTTSTSRVWVVREGKVTEESFDPRDVGLDLVPVEALRGADAAYNADVARRLLNGETGPVRDAVLLNSAAALVALSPGAGTLAEQLRAGMAQAAEAIDSGAAKRALERWVAASNA</sequence>
<name>TRPD_STRAW</name>
<comment type="function">
    <text evidence="1">Catalyzes the transfer of the phosphoribosyl group of 5-phosphorylribose-1-pyrophosphate (PRPP) to anthranilate to yield N-(5'-phosphoribosyl)-anthranilate (PRA).</text>
</comment>
<comment type="catalytic activity">
    <reaction evidence="1">
        <text>N-(5-phospho-beta-D-ribosyl)anthranilate + diphosphate = 5-phospho-alpha-D-ribose 1-diphosphate + anthranilate</text>
        <dbReference type="Rhea" id="RHEA:11768"/>
        <dbReference type="ChEBI" id="CHEBI:16567"/>
        <dbReference type="ChEBI" id="CHEBI:18277"/>
        <dbReference type="ChEBI" id="CHEBI:33019"/>
        <dbReference type="ChEBI" id="CHEBI:58017"/>
        <dbReference type="EC" id="2.4.2.18"/>
    </reaction>
</comment>
<comment type="cofactor">
    <cofactor evidence="1">
        <name>Mg(2+)</name>
        <dbReference type="ChEBI" id="CHEBI:18420"/>
    </cofactor>
    <text evidence="1">Binds 2 magnesium ions per monomer.</text>
</comment>
<comment type="pathway">
    <text evidence="1">Amino-acid biosynthesis; L-tryptophan biosynthesis; L-tryptophan from chorismate: step 2/5.</text>
</comment>
<comment type="subunit">
    <text evidence="1">Homodimer.</text>
</comment>
<comment type="similarity">
    <text evidence="1">Belongs to the anthranilate phosphoribosyltransferase family.</text>
</comment>
<evidence type="ECO:0000255" key="1">
    <source>
        <dbReference type="HAMAP-Rule" id="MF_00211"/>
    </source>
</evidence>
<keyword id="KW-0028">Amino-acid biosynthesis</keyword>
<keyword id="KW-0057">Aromatic amino acid biosynthesis</keyword>
<keyword id="KW-0328">Glycosyltransferase</keyword>
<keyword id="KW-0460">Magnesium</keyword>
<keyword id="KW-0479">Metal-binding</keyword>
<keyword id="KW-1185">Reference proteome</keyword>
<keyword id="KW-0808">Transferase</keyword>
<keyword id="KW-0822">Tryptophan biosynthesis</keyword>